<dbReference type="EC" id="3.5.1.88" evidence="1"/>
<dbReference type="EMBL" id="AL939107">
    <property type="protein sequence ID" value="CAB62674.1"/>
    <property type="molecule type" value="Genomic_DNA"/>
</dbReference>
<dbReference type="RefSeq" id="NP_625182.1">
    <property type="nucleotide sequence ID" value="NC_003888.3"/>
</dbReference>
<dbReference type="RefSeq" id="WP_011027414.1">
    <property type="nucleotide sequence ID" value="NZ_VNID01000004.1"/>
</dbReference>
<dbReference type="SMR" id="Q9RD27"/>
<dbReference type="STRING" id="100226.gene:17758466"/>
<dbReference type="PaxDb" id="100226-SCO0883"/>
<dbReference type="KEGG" id="sco:SCO0883"/>
<dbReference type="PATRIC" id="fig|100226.15.peg.874"/>
<dbReference type="eggNOG" id="COG0242">
    <property type="taxonomic scope" value="Bacteria"/>
</dbReference>
<dbReference type="HOGENOM" id="CLU_061901_5_2_11"/>
<dbReference type="InParanoid" id="Q9RD27"/>
<dbReference type="OrthoDB" id="9804313at2"/>
<dbReference type="PhylomeDB" id="Q9RD27"/>
<dbReference type="Proteomes" id="UP000001973">
    <property type="component" value="Chromosome"/>
</dbReference>
<dbReference type="GO" id="GO:0046872">
    <property type="term" value="F:metal ion binding"/>
    <property type="evidence" value="ECO:0007669"/>
    <property type="project" value="UniProtKB-KW"/>
</dbReference>
<dbReference type="GO" id="GO:0042586">
    <property type="term" value="F:peptide deformylase activity"/>
    <property type="evidence" value="ECO:0000318"/>
    <property type="project" value="GO_Central"/>
</dbReference>
<dbReference type="GO" id="GO:0043686">
    <property type="term" value="P:co-translational protein modification"/>
    <property type="evidence" value="ECO:0000318"/>
    <property type="project" value="GO_Central"/>
</dbReference>
<dbReference type="GO" id="GO:0006412">
    <property type="term" value="P:translation"/>
    <property type="evidence" value="ECO:0007669"/>
    <property type="project" value="UniProtKB-UniRule"/>
</dbReference>
<dbReference type="CDD" id="cd00487">
    <property type="entry name" value="Pep_deformylase"/>
    <property type="match status" value="1"/>
</dbReference>
<dbReference type="FunFam" id="3.90.45.10:FF:000003">
    <property type="entry name" value="Peptide deformylase"/>
    <property type="match status" value="1"/>
</dbReference>
<dbReference type="Gene3D" id="3.90.45.10">
    <property type="entry name" value="Peptide deformylase"/>
    <property type="match status" value="1"/>
</dbReference>
<dbReference type="HAMAP" id="MF_00163">
    <property type="entry name" value="Pep_deformylase"/>
    <property type="match status" value="1"/>
</dbReference>
<dbReference type="InterPro" id="IPR023635">
    <property type="entry name" value="Peptide_deformylase"/>
</dbReference>
<dbReference type="InterPro" id="IPR036821">
    <property type="entry name" value="Peptide_deformylase_sf"/>
</dbReference>
<dbReference type="NCBIfam" id="NF001159">
    <property type="entry name" value="PRK00150.1-3"/>
    <property type="match status" value="1"/>
</dbReference>
<dbReference type="PANTHER" id="PTHR10458">
    <property type="entry name" value="PEPTIDE DEFORMYLASE"/>
    <property type="match status" value="1"/>
</dbReference>
<dbReference type="PANTHER" id="PTHR10458:SF2">
    <property type="entry name" value="PEPTIDE DEFORMYLASE, MITOCHONDRIAL"/>
    <property type="match status" value="1"/>
</dbReference>
<dbReference type="Pfam" id="PF01327">
    <property type="entry name" value="Pep_deformylase"/>
    <property type="match status" value="1"/>
</dbReference>
<dbReference type="PIRSF" id="PIRSF004749">
    <property type="entry name" value="Pep_def"/>
    <property type="match status" value="1"/>
</dbReference>
<dbReference type="PRINTS" id="PR01576">
    <property type="entry name" value="PDEFORMYLASE"/>
</dbReference>
<dbReference type="SUPFAM" id="SSF56420">
    <property type="entry name" value="Peptide deformylase"/>
    <property type="match status" value="1"/>
</dbReference>
<name>DEF1_STRCO</name>
<gene>
    <name evidence="1" type="primary">def1</name>
    <name type="ordered locus">SCO0883</name>
    <name type="ORF">SCM1.16</name>
</gene>
<reference key="1">
    <citation type="journal article" date="2002" name="Nature">
        <title>Complete genome sequence of the model actinomycete Streptomyces coelicolor A3(2).</title>
        <authorList>
            <person name="Bentley S.D."/>
            <person name="Chater K.F."/>
            <person name="Cerdeno-Tarraga A.-M."/>
            <person name="Challis G.L."/>
            <person name="Thomson N.R."/>
            <person name="James K.D."/>
            <person name="Harris D.E."/>
            <person name="Quail M.A."/>
            <person name="Kieser H."/>
            <person name="Harper D."/>
            <person name="Bateman A."/>
            <person name="Brown S."/>
            <person name="Chandra G."/>
            <person name="Chen C.W."/>
            <person name="Collins M."/>
            <person name="Cronin A."/>
            <person name="Fraser A."/>
            <person name="Goble A."/>
            <person name="Hidalgo J."/>
            <person name="Hornsby T."/>
            <person name="Howarth S."/>
            <person name="Huang C.-H."/>
            <person name="Kieser T."/>
            <person name="Larke L."/>
            <person name="Murphy L.D."/>
            <person name="Oliver K."/>
            <person name="O'Neil S."/>
            <person name="Rabbinowitsch E."/>
            <person name="Rajandream M.A."/>
            <person name="Rutherford K.M."/>
            <person name="Rutter S."/>
            <person name="Seeger K."/>
            <person name="Saunders D."/>
            <person name="Sharp S."/>
            <person name="Squares R."/>
            <person name="Squares S."/>
            <person name="Taylor K."/>
            <person name="Warren T."/>
            <person name="Wietzorrek A."/>
            <person name="Woodward J.R."/>
            <person name="Barrell B.G."/>
            <person name="Parkhill J."/>
            <person name="Hopwood D.A."/>
        </authorList>
    </citation>
    <scope>NUCLEOTIDE SEQUENCE [LARGE SCALE GENOMIC DNA]</scope>
    <source>
        <strain>ATCC BAA-471 / A3(2) / M145</strain>
    </source>
</reference>
<sequence length="218" mass="23198">MGTPSDRVPLAERVEELLAVGGPLPIVAAGDPVLRRAAEPYDGQVAPALFERFVEALRLTMHAAPGVGLAAPQVGVGLRVAVIEDPAPVPDEVRVARGRVPQPFRVLVNPSYEPAGAGRAAFFEGCLSVPGWQAVVARHAEVRLRAHDEHGRAVDEVFAGWPARIVQHETDHLDGTLYLDRAELRSLASNAAMAELWSQPTPRRAASALGFELPGPAA</sequence>
<organism>
    <name type="scientific">Streptomyces coelicolor (strain ATCC BAA-471 / A3(2) / M145)</name>
    <dbReference type="NCBI Taxonomy" id="100226"/>
    <lineage>
        <taxon>Bacteria</taxon>
        <taxon>Bacillati</taxon>
        <taxon>Actinomycetota</taxon>
        <taxon>Actinomycetes</taxon>
        <taxon>Kitasatosporales</taxon>
        <taxon>Streptomycetaceae</taxon>
        <taxon>Streptomyces</taxon>
        <taxon>Streptomyces albidoflavus group</taxon>
    </lineage>
</organism>
<comment type="function">
    <text evidence="1">Removes the formyl group from the N-terminal Met of newly synthesized proteins. Requires at least a dipeptide for an efficient rate of reaction. N-terminal L-methionine is a prerequisite for activity but the enzyme has broad specificity at other positions.</text>
</comment>
<comment type="catalytic activity">
    <reaction evidence="1">
        <text>N-terminal N-formyl-L-methionyl-[peptide] + H2O = N-terminal L-methionyl-[peptide] + formate</text>
        <dbReference type="Rhea" id="RHEA:24420"/>
        <dbReference type="Rhea" id="RHEA-COMP:10639"/>
        <dbReference type="Rhea" id="RHEA-COMP:10640"/>
        <dbReference type="ChEBI" id="CHEBI:15377"/>
        <dbReference type="ChEBI" id="CHEBI:15740"/>
        <dbReference type="ChEBI" id="CHEBI:49298"/>
        <dbReference type="ChEBI" id="CHEBI:64731"/>
        <dbReference type="EC" id="3.5.1.88"/>
    </reaction>
</comment>
<comment type="cofactor">
    <cofactor evidence="1">
        <name>Fe(2+)</name>
        <dbReference type="ChEBI" id="CHEBI:29033"/>
    </cofactor>
    <text evidence="1">Binds 1 Fe(2+) ion.</text>
</comment>
<comment type="similarity">
    <text evidence="1">Belongs to the polypeptide deformylase family.</text>
</comment>
<evidence type="ECO:0000255" key="1">
    <source>
        <dbReference type="HAMAP-Rule" id="MF_00163"/>
    </source>
</evidence>
<feature type="chain" id="PRO_0000082852" description="Peptide deformylase 1">
    <location>
        <begin position="1"/>
        <end position="218"/>
    </location>
</feature>
<feature type="active site" evidence="1">
    <location>
        <position position="169"/>
    </location>
</feature>
<feature type="binding site" evidence="1">
    <location>
        <position position="126"/>
    </location>
    <ligand>
        <name>Fe cation</name>
        <dbReference type="ChEBI" id="CHEBI:24875"/>
    </ligand>
</feature>
<feature type="binding site" evidence="1">
    <location>
        <position position="168"/>
    </location>
    <ligand>
        <name>Fe cation</name>
        <dbReference type="ChEBI" id="CHEBI:24875"/>
    </ligand>
</feature>
<feature type="binding site" evidence="1">
    <location>
        <position position="172"/>
    </location>
    <ligand>
        <name>Fe cation</name>
        <dbReference type="ChEBI" id="CHEBI:24875"/>
    </ligand>
</feature>
<accession>Q9RD27</accession>
<proteinExistence type="inferred from homology"/>
<protein>
    <recommendedName>
        <fullName evidence="1">Peptide deformylase 1</fullName>
        <shortName evidence="1">PDF 1</shortName>
        <ecNumber evidence="1">3.5.1.88</ecNumber>
    </recommendedName>
    <alternativeName>
        <fullName evidence="1">Polypeptide deformylase 1</fullName>
    </alternativeName>
</protein>
<keyword id="KW-0378">Hydrolase</keyword>
<keyword id="KW-0408">Iron</keyword>
<keyword id="KW-0479">Metal-binding</keyword>
<keyword id="KW-0648">Protein biosynthesis</keyword>
<keyword id="KW-1185">Reference proteome</keyword>